<proteinExistence type="inferred from homology"/>
<accession>P09899</accession>
<gene>
    <name evidence="2" type="primary">rpsL</name>
</gene>
<sequence>MPTIQQLVRKGRSPKVVNTNGPALQGNPMRRGVCTRVYTTTPTKPNSAVRKVARVRLNGGIEVTAYIPGEGHNLQEHSIVLVRGGRVKDLPGVRYKIVRGALDTQGVKNRGQARSRYGAKKEKK</sequence>
<keyword id="KW-0488">Methylation</keyword>
<keyword id="KW-0687">Ribonucleoprotein</keyword>
<keyword id="KW-0689">Ribosomal protein</keyword>
<keyword id="KW-0694">RNA-binding</keyword>
<keyword id="KW-0699">rRNA-binding</keyword>
<keyword id="KW-0820">tRNA-binding</keyword>
<reference key="1">
    <citation type="journal article" date="1987" name="J. Bacteriol.">
        <title>Organization and codon usage of the streptomycin operon in Micrococcus luteus, a bacterium with a high genomic G + C content.</title>
        <authorList>
            <person name="Ohama T."/>
            <person name="Yamao F."/>
            <person name="Muto A."/>
            <person name="Osawa S."/>
        </authorList>
    </citation>
    <scope>NUCLEOTIDE SEQUENCE [GENOMIC DNA]</scope>
</reference>
<organism>
    <name type="scientific">Micrococcus luteus</name>
    <name type="common">Micrococcus lysodeikticus</name>
    <dbReference type="NCBI Taxonomy" id="1270"/>
    <lineage>
        <taxon>Bacteria</taxon>
        <taxon>Bacillati</taxon>
        <taxon>Actinomycetota</taxon>
        <taxon>Actinomycetes</taxon>
        <taxon>Micrococcales</taxon>
        <taxon>Micrococcaceae</taxon>
        <taxon>Micrococcus</taxon>
    </lineage>
</organism>
<protein>
    <recommendedName>
        <fullName evidence="2">Small ribosomal subunit protein uS12</fullName>
    </recommendedName>
    <alternativeName>
        <fullName evidence="4">30S ribosomal protein S12</fullName>
    </alternativeName>
</protein>
<feature type="chain" id="PRO_0000146255" description="Small ribosomal subunit protein uS12">
    <location>
        <begin position="1"/>
        <end position="124"/>
    </location>
</feature>
<feature type="region of interest" description="Disordered" evidence="3">
    <location>
        <begin position="105"/>
        <end position="124"/>
    </location>
</feature>
<feature type="compositionally biased region" description="Basic residues" evidence="3">
    <location>
        <begin position="111"/>
        <end position="124"/>
    </location>
</feature>
<feature type="modified residue" description="3-methylthioaspartic acid" evidence="1">
    <location>
        <position position="89"/>
    </location>
</feature>
<comment type="function">
    <text evidence="2">With S4 and S5 plays an important role in translational accuracy.</text>
</comment>
<comment type="function">
    <text evidence="2">Interacts with and stabilizes bases of the 16S rRNA that are involved in tRNA selection in the A site and with the mRNA backbone. Located at the interface of the 30S and 50S subunits, it traverses the body of the 30S subunit contacting proteins on the other side and probably holding the rRNA structure together. The combined cluster of proteins S8, S12 and S17 appears to hold together the shoulder and platform of the 30S subunit.</text>
</comment>
<comment type="subunit">
    <text evidence="2">Part of the 30S ribosomal subunit. Contacts proteins S8 and S17. May interact with IF1 in the 30S initiation complex.</text>
</comment>
<comment type="similarity">
    <text evidence="2">Belongs to the universal ribosomal protein uS12 family.</text>
</comment>
<evidence type="ECO:0000250" key="1"/>
<evidence type="ECO:0000255" key="2">
    <source>
        <dbReference type="HAMAP-Rule" id="MF_00403"/>
    </source>
</evidence>
<evidence type="ECO:0000256" key="3">
    <source>
        <dbReference type="SAM" id="MobiDB-lite"/>
    </source>
</evidence>
<evidence type="ECO:0000305" key="4"/>
<dbReference type="EMBL" id="M17788">
    <property type="protein sequence ID" value="AAA25317.1"/>
    <property type="molecule type" value="Genomic_DNA"/>
</dbReference>
<dbReference type="PIR" id="A26956">
    <property type="entry name" value="A26956"/>
</dbReference>
<dbReference type="SMR" id="P09899"/>
<dbReference type="STRING" id="1232675.GCA_000309825_02166"/>
<dbReference type="GO" id="GO:0015935">
    <property type="term" value="C:small ribosomal subunit"/>
    <property type="evidence" value="ECO:0007669"/>
    <property type="project" value="InterPro"/>
</dbReference>
<dbReference type="GO" id="GO:0019843">
    <property type="term" value="F:rRNA binding"/>
    <property type="evidence" value="ECO:0007669"/>
    <property type="project" value="UniProtKB-UniRule"/>
</dbReference>
<dbReference type="GO" id="GO:0003735">
    <property type="term" value="F:structural constituent of ribosome"/>
    <property type="evidence" value="ECO:0007669"/>
    <property type="project" value="InterPro"/>
</dbReference>
<dbReference type="GO" id="GO:0000049">
    <property type="term" value="F:tRNA binding"/>
    <property type="evidence" value="ECO:0007669"/>
    <property type="project" value="UniProtKB-UniRule"/>
</dbReference>
<dbReference type="GO" id="GO:0006412">
    <property type="term" value="P:translation"/>
    <property type="evidence" value="ECO:0007669"/>
    <property type="project" value="UniProtKB-UniRule"/>
</dbReference>
<dbReference type="CDD" id="cd03368">
    <property type="entry name" value="Ribosomal_S12"/>
    <property type="match status" value="1"/>
</dbReference>
<dbReference type="FunFam" id="2.40.50.140:FF:000001">
    <property type="entry name" value="30S ribosomal protein S12"/>
    <property type="match status" value="1"/>
</dbReference>
<dbReference type="Gene3D" id="2.40.50.140">
    <property type="entry name" value="Nucleic acid-binding proteins"/>
    <property type="match status" value="1"/>
</dbReference>
<dbReference type="HAMAP" id="MF_00403_B">
    <property type="entry name" value="Ribosomal_uS12_B"/>
    <property type="match status" value="1"/>
</dbReference>
<dbReference type="InterPro" id="IPR012340">
    <property type="entry name" value="NA-bd_OB-fold"/>
</dbReference>
<dbReference type="InterPro" id="IPR006032">
    <property type="entry name" value="Ribosomal_uS12"/>
</dbReference>
<dbReference type="InterPro" id="IPR005679">
    <property type="entry name" value="Ribosomal_uS12_bac"/>
</dbReference>
<dbReference type="NCBIfam" id="TIGR00981">
    <property type="entry name" value="rpsL_bact"/>
    <property type="match status" value="1"/>
</dbReference>
<dbReference type="PANTHER" id="PTHR11652">
    <property type="entry name" value="30S RIBOSOMAL PROTEIN S12 FAMILY MEMBER"/>
    <property type="match status" value="1"/>
</dbReference>
<dbReference type="Pfam" id="PF00164">
    <property type="entry name" value="Ribosom_S12_S23"/>
    <property type="match status" value="1"/>
</dbReference>
<dbReference type="PIRSF" id="PIRSF002133">
    <property type="entry name" value="Ribosomal_S12/S23"/>
    <property type="match status" value="1"/>
</dbReference>
<dbReference type="PRINTS" id="PR01034">
    <property type="entry name" value="RIBOSOMALS12"/>
</dbReference>
<dbReference type="SUPFAM" id="SSF50249">
    <property type="entry name" value="Nucleic acid-binding proteins"/>
    <property type="match status" value="1"/>
</dbReference>
<name>RS12_MICLU</name>